<gene>
    <name type="primary">OPG037</name>
    <name type="synonym">M1L</name>
</gene>
<reference key="1">
    <citation type="journal article" date="1990" name="Virology">
        <title>The complete DNA sequence of vaccinia virus.</title>
        <authorList>
            <person name="Goebel S.J."/>
            <person name="Johnson G.P."/>
            <person name="Perkus M.E."/>
            <person name="Davis S.W."/>
            <person name="Winslow J.P."/>
            <person name="Paoletti E."/>
        </authorList>
    </citation>
    <scope>NUCLEOTIDE SEQUENCE [LARGE SCALE GENOMIC DNA]</scope>
</reference>
<reference key="2">
    <citation type="journal article" date="1990" name="Virology">
        <title>Appendix to 'The complete DNA sequence of vaccinia virus'.</title>
        <authorList>
            <person name="Goebel S.J."/>
            <person name="Johnson G.P."/>
            <person name="Perkus M.E."/>
            <person name="Davis S.W."/>
            <person name="Winslow J.P."/>
            <person name="Paoletti E."/>
        </authorList>
    </citation>
    <scope>NUCLEOTIDE SEQUENCE [LARGE SCALE GENOMIC DNA]</scope>
</reference>
<dbReference type="EMBL" id="M35027">
    <property type="protein sequence ID" value="AAA48003.1"/>
    <property type="molecule type" value="Genomic_DNA"/>
</dbReference>
<dbReference type="PIR" id="G42504">
    <property type="entry name" value="G42504"/>
</dbReference>
<dbReference type="SMR" id="P20640"/>
<dbReference type="Proteomes" id="UP000008269">
    <property type="component" value="Segment"/>
</dbReference>
<dbReference type="GO" id="GO:0030430">
    <property type="term" value="C:host cell cytoplasm"/>
    <property type="evidence" value="ECO:0007669"/>
    <property type="project" value="UniProtKB-SubCell"/>
</dbReference>
<dbReference type="GO" id="GO:0052150">
    <property type="term" value="P:symbiont-mediated perturbation of host apoptosis"/>
    <property type="evidence" value="ECO:0007669"/>
    <property type="project" value="UniProtKB-KW"/>
</dbReference>
<dbReference type="Gene3D" id="1.25.40.20">
    <property type="entry name" value="Ankyrin repeat-containing domain"/>
    <property type="match status" value="2"/>
</dbReference>
<dbReference type="InterPro" id="IPR002110">
    <property type="entry name" value="Ankyrin_rpt"/>
</dbReference>
<dbReference type="InterPro" id="IPR036770">
    <property type="entry name" value="Ankyrin_rpt-contain_sf"/>
</dbReference>
<dbReference type="PANTHER" id="PTHR24198">
    <property type="entry name" value="ANKYRIN REPEAT AND PROTEIN KINASE DOMAIN-CONTAINING PROTEIN"/>
    <property type="match status" value="1"/>
</dbReference>
<dbReference type="PANTHER" id="PTHR24198:SF165">
    <property type="entry name" value="ANKYRIN REPEAT-CONTAINING PROTEIN-RELATED"/>
    <property type="match status" value="1"/>
</dbReference>
<dbReference type="Pfam" id="PF00023">
    <property type="entry name" value="Ank"/>
    <property type="match status" value="1"/>
</dbReference>
<dbReference type="Pfam" id="PF12796">
    <property type="entry name" value="Ank_2"/>
    <property type="match status" value="1"/>
</dbReference>
<dbReference type="SMART" id="SM00248">
    <property type="entry name" value="ANK"/>
    <property type="match status" value="7"/>
</dbReference>
<dbReference type="SUPFAM" id="SSF48403">
    <property type="entry name" value="Ankyrin repeat"/>
    <property type="match status" value="2"/>
</dbReference>
<dbReference type="PROSITE" id="PS50297">
    <property type="entry name" value="ANK_REP_REGION"/>
    <property type="match status" value="1"/>
</dbReference>
<dbReference type="PROSITE" id="PS50088">
    <property type="entry name" value="ANK_REPEAT"/>
    <property type="match status" value="1"/>
</dbReference>
<name>PG037_VACCC</name>
<keyword id="KW-0040">ANK repeat</keyword>
<keyword id="KW-0244">Early protein</keyword>
<keyword id="KW-1035">Host cytoplasm</keyword>
<keyword id="KW-0945">Host-virus interaction</keyword>
<keyword id="KW-1119">Modulation of host cell apoptosis by virus</keyword>
<keyword id="KW-1185">Reference proteome</keyword>
<keyword id="KW-0677">Repeat</keyword>
<proteinExistence type="inferred from homology"/>
<accession>P20640</accession>
<organismHost>
    <name type="scientific">Homo sapiens</name>
    <name type="common">Human</name>
    <dbReference type="NCBI Taxonomy" id="9606"/>
</organismHost>
<organism>
    <name type="scientific">Vaccinia virus (strain Copenhagen)</name>
    <name type="common">VACV</name>
    <dbReference type="NCBI Taxonomy" id="10249"/>
    <lineage>
        <taxon>Viruses</taxon>
        <taxon>Varidnaviria</taxon>
        <taxon>Bamfordvirae</taxon>
        <taxon>Nucleocytoviricota</taxon>
        <taxon>Pokkesviricetes</taxon>
        <taxon>Chitovirales</taxon>
        <taxon>Poxviridae</taxon>
        <taxon>Chordopoxvirinae</taxon>
        <taxon>Orthopoxvirus</taxon>
        <taxon>Vaccinia virus</taxon>
    </lineage>
</organism>
<comment type="function">
    <text evidence="1">Inhibits host apoptosis. Acts by associating with host apoptosome.</text>
</comment>
<comment type="subunit">
    <text evidence="1">May interact with host caspase-9-Apaf-1 complex.</text>
</comment>
<comment type="subcellular location">
    <subcellularLocation>
        <location evidence="1">Host cytoplasm</location>
    </subcellularLocation>
</comment>
<comment type="induction">
    <text evidence="1">Expressed in the early phase of the viral replicative cycle.</text>
</comment>
<comment type="similarity">
    <text evidence="2">Belongs to the orthopoxvirus OPG037 protein family.</text>
</comment>
<feature type="chain" id="PRO_0000067098" description="Inhibitor of Apoptosis OPG037">
    <location>
        <begin position="1"/>
        <end position="472"/>
    </location>
</feature>
<feature type="repeat" description="ANK 1">
    <location>
        <begin position="97"/>
        <end position="126"/>
    </location>
</feature>
<feature type="repeat" description="ANK 2">
    <location>
        <begin position="130"/>
        <end position="161"/>
    </location>
</feature>
<feature type="repeat" description="ANK 3">
    <location>
        <begin position="233"/>
        <end position="263"/>
    </location>
</feature>
<feature type="repeat" description="ANK 4">
    <location>
        <begin position="267"/>
        <end position="297"/>
    </location>
</feature>
<feature type="repeat" description="ANK 5">
    <location>
        <begin position="322"/>
        <end position="351"/>
    </location>
</feature>
<feature type="repeat" description="ANK 6">
    <location>
        <begin position="353"/>
        <end position="377"/>
    </location>
</feature>
<protein>
    <recommendedName>
        <fullName>Inhibitor of Apoptosis OPG037</fullName>
    </recommendedName>
    <alternativeName>
        <fullName>Ankyrin repeat protein M1</fullName>
    </alternativeName>
</protein>
<sequence length="472" mass="54183">MIFVIESKLLQIYRNRNRNINFYTTMDNIMSAEYYLSLYAKYNSKNLDVFRNMLQAIEPSGNNYHILHAYCGIKGLDERFVEELLHRGYSPNETDDDGNYPLHIASKINNNRIVAMLLTHGADPNACDKHNKTPLYYLSGTDDEVIERINLLVQYGAKINNSVDEEGCGPLLACTDPSERVFKKIMSIGFEARIVDKFGKNHIHRHLMSDNPKASTISWMMKLGISPSKPDHDGNTPLHIVCSKTVKNVDIIDLLLPSTDVNKQNKFGDSPLTLLIKTLSPAHLINKLLSTSNVITDQTVNICIFYDRDDVLEIINDKGKQYDSTDFKMAVEVGSIRCVKYLLDNDIICEDAMYYAVLSEYETMVDYLLFNHFSVDSVVNGHTCMSECVRLNNPVILSKLMLHNPTSETMYLTMKAIEKDKLDKSIIIPFIAYFVLMHPDFCKNRRYFTSYKRFVTDYVHEGVSYEVFDDYF</sequence>
<evidence type="ECO:0000250" key="1">
    <source>
        <dbReference type="UniProtKB" id="P14356"/>
    </source>
</evidence>
<evidence type="ECO:0000305" key="2"/>